<comment type="function">
    <text evidence="1">Catalyzes the interconversion of methylthioribose-1-phosphate (MTR-1-P) into methylthioribulose-1-phosphate (MTRu-1-P).</text>
</comment>
<comment type="catalytic activity">
    <reaction evidence="1">
        <text>5-(methylsulfanyl)-alpha-D-ribose 1-phosphate = 5-(methylsulfanyl)-D-ribulose 1-phosphate</text>
        <dbReference type="Rhea" id="RHEA:19989"/>
        <dbReference type="ChEBI" id="CHEBI:58533"/>
        <dbReference type="ChEBI" id="CHEBI:58548"/>
        <dbReference type="EC" id="5.3.1.23"/>
    </reaction>
</comment>
<comment type="pathway">
    <text evidence="1">Amino-acid biosynthesis; L-methionine biosynthesis via salvage pathway; L-methionine from S-methyl-5-thio-alpha-D-ribose 1-phosphate: step 1/6.</text>
</comment>
<comment type="subcellular location">
    <subcellularLocation>
        <location evidence="1">Cytoplasm</location>
    </subcellularLocation>
    <subcellularLocation>
        <location evidence="1">Nucleus</location>
    </subcellularLocation>
</comment>
<comment type="similarity">
    <text evidence="1">Belongs to the eIF-2B alpha/beta/delta subunits family. MtnA subfamily.</text>
</comment>
<organism>
    <name type="scientific">Trypanosoma cruzi (strain CL Brener)</name>
    <dbReference type="NCBI Taxonomy" id="353153"/>
    <lineage>
        <taxon>Eukaryota</taxon>
        <taxon>Discoba</taxon>
        <taxon>Euglenozoa</taxon>
        <taxon>Kinetoplastea</taxon>
        <taxon>Metakinetoplastina</taxon>
        <taxon>Trypanosomatida</taxon>
        <taxon>Trypanosomatidae</taxon>
        <taxon>Trypanosoma</taxon>
        <taxon>Schizotrypanum</taxon>
    </lineage>
</organism>
<dbReference type="EC" id="5.3.1.23" evidence="1"/>
<dbReference type="EMBL" id="AAHK01001483">
    <property type="protein sequence ID" value="EAN85189.1"/>
    <property type="molecule type" value="Genomic_DNA"/>
</dbReference>
<dbReference type="RefSeq" id="XP_807040.1">
    <property type="nucleotide sequence ID" value="XM_801947.1"/>
</dbReference>
<dbReference type="SMR" id="Q4CY36"/>
<dbReference type="FunCoup" id="Q4CY36">
    <property type="interactions" value="306"/>
</dbReference>
<dbReference type="STRING" id="353153.Q4CY36"/>
<dbReference type="PaxDb" id="353153-Q4CY36"/>
<dbReference type="EnsemblProtists" id="EAN85189">
    <property type="protein sequence ID" value="EAN85189"/>
    <property type="gene ID" value="Tc00.1047053503971.40"/>
</dbReference>
<dbReference type="GeneID" id="3537198"/>
<dbReference type="KEGG" id="tcr:503971.40"/>
<dbReference type="eggNOG" id="KOG1468">
    <property type="taxonomic scope" value="Eukaryota"/>
</dbReference>
<dbReference type="InParanoid" id="Q4CY36"/>
<dbReference type="OMA" id="GWHELAS"/>
<dbReference type="UniPathway" id="UPA00904">
    <property type="reaction ID" value="UER00874"/>
</dbReference>
<dbReference type="Proteomes" id="UP000002296">
    <property type="component" value="Unassembled WGS sequence"/>
</dbReference>
<dbReference type="GO" id="GO:0005737">
    <property type="term" value="C:cytoplasm"/>
    <property type="evidence" value="ECO:0007669"/>
    <property type="project" value="UniProtKB-SubCell"/>
</dbReference>
<dbReference type="GO" id="GO:0005634">
    <property type="term" value="C:nucleus"/>
    <property type="evidence" value="ECO:0007669"/>
    <property type="project" value="UniProtKB-SubCell"/>
</dbReference>
<dbReference type="GO" id="GO:0046523">
    <property type="term" value="F:S-methyl-5-thioribose-1-phosphate isomerase activity"/>
    <property type="evidence" value="ECO:0007669"/>
    <property type="project" value="UniProtKB-UniRule"/>
</dbReference>
<dbReference type="GO" id="GO:0019509">
    <property type="term" value="P:L-methionine salvage from methylthioadenosine"/>
    <property type="evidence" value="ECO:0007669"/>
    <property type="project" value="UniProtKB-UniRule"/>
</dbReference>
<dbReference type="FunFam" id="1.20.120.420:FF:000003">
    <property type="entry name" value="Methylthioribose-1-phosphate isomerase"/>
    <property type="match status" value="1"/>
</dbReference>
<dbReference type="FunFam" id="3.40.50.10470:FF:000006">
    <property type="entry name" value="Methylthioribose-1-phosphate isomerase"/>
    <property type="match status" value="1"/>
</dbReference>
<dbReference type="Gene3D" id="1.20.120.420">
    <property type="entry name" value="translation initiation factor eif-2b, domain 1"/>
    <property type="match status" value="1"/>
</dbReference>
<dbReference type="Gene3D" id="3.40.50.10470">
    <property type="entry name" value="Translation initiation factor eif-2b, domain 2"/>
    <property type="match status" value="1"/>
</dbReference>
<dbReference type="HAMAP" id="MF_01678">
    <property type="entry name" value="Salvage_MtnA"/>
    <property type="match status" value="1"/>
</dbReference>
<dbReference type="InterPro" id="IPR000649">
    <property type="entry name" value="IF-2B-related"/>
</dbReference>
<dbReference type="InterPro" id="IPR005251">
    <property type="entry name" value="IF-M1Pi"/>
</dbReference>
<dbReference type="InterPro" id="IPR042529">
    <property type="entry name" value="IF_2B-like_C"/>
</dbReference>
<dbReference type="InterPro" id="IPR011559">
    <property type="entry name" value="Initiation_fac_2B_a/b/d"/>
</dbReference>
<dbReference type="InterPro" id="IPR027363">
    <property type="entry name" value="M1Pi_N"/>
</dbReference>
<dbReference type="InterPro" id="IPR037171">
    <property type="entry name" value="NagB/RpiA_transferase-like"/>
</dbReference>
<dbReference type="NCBIfam" id="TIGR00524">
    <property type="entry name" value="eIF-2B_rel"/>
    <property type="match status" value="1"/>
</dbReference>
<dbReference type="NCBIfam" id="NF004326">
    <property type="entry name" value="PRK05720.1"/>
    <property type="match status" value="1"/>
</dbReference>
<dbReference type="NCBIfam" id="TIGR00512">
    <property type="entry name" value="salvage_mtnA"/>
    <property type="match status" value="1"/>
</dbReference>
<dbReference type="PANTHER" id="PTHR43475">
    <property type="entry name" value="METHYLTHIORIBOSE-1-PHOSPHATE ISOMERASE"/>
    <property type="match status" value="1"/>
</dbReference>
<dbReference type="PANTHER" id="PTHR43475:SF1">
    <property type="entry name" value="METHYLTHIORIBOSE-1-PHOSPHATE ISOMERASE"/>
    <property type="match status" value="1"/>
</dbReference>
<dbReference type="Pfam" id="PF01008">
    <property type="entry name" value="IF-2B"/>
    <property type="match status" value="1"/>
</dbReference>
<dbReference type="SUPFAM" id="SSF100950">
    <property type="entry name" value="NagB/RpiA/CoA transferase-like"/>
    <property type="match status" value="1"/>
</dbReference>
<sequence>MTRAHNATLESIQYARGTLRLLDQRKLPFETVFDEILTVDDIWTAIKEMRVRGAPAIAVSAALAIAVAAGNELKKNDGACNSVDGTRRFLLESCDTVMTARPTAVNLSKTLIRLKRDIADVTANTAGGLVEACAVLAEKIYAEDVAYNEGIMRHGAAHVTQLVKKSKVSVITICNTGALATSRYGTALGVVRQLFYEGKLEQVYACETRPWNQGARLTVYECVQENIPFTLICDSAVSALMGSRPIDAVIVGADRICRNGDTANKIGTCNLAVAAAHYGVPFFVAAPSTTLDPMTADGESVVIEERETMELTHNMATQQRVVAEGPSLRIWNPVFDITPAALVTGGIITERGVLQPSATAPFFDITRIVGAS</sequence>
<keyword id="KW-0028">Amino-acid biosynthesis</keyword>
<keyword id="KW-0963">Cytoplasm</keyword>
<keyword id="KW-0413">Isomerase</keyword>
<keyword id="KW-0486">Methionine biosynthesis</keyword>
<keyword id="KW-0539">Nucleus</keyword>
<keyword id="KW-1185">Reference proteome</keyword>
<reference key="1">
    <citation type="journal article" date="2005" name="Science">
        <title>The genome sequence of Trypanosoma cruzi, etiologic agent of Chagas disease.</title>
        <authorList>
            <person name="El-Sayed N.M.A."/>
            <person name="Myler P.J."/>
            <person name="Bartholomeu D.C."/>
            <person name="Nilsson D."/>
            <person name="Aggarwal G."/>
            <person name="Tran A.-N."/>
            <person name="Ghedin E."/>
            <person name="Worthey E.A."/>
            <person name="Delcher A.L."/>
            <person name="Blandin G."/>
            <person name="Westenberger S.J."/>
            <person name="Caler E."/>
            <person name="Cerqueira G.C."/>
            <person name="Branche C."/>
            <person name="Haas B."/>
            <person name="Anupama A."/>
            <person name="Arner E."/>
            <person name="Aslund L."/>
            <person name="Attipoe P."/>
            <person name="Bontempi E."/>
            <person name="Bringaud F."/>
            <person name="Burton P."/>
            <person name="Cadag E."/>
            <person name="Campbell D.A."/>
            <person name="Carrington M."/>
            <person name="Crabtree J."/>
            <person name="Darban H."/>
            <person name="da Silveira J.F."/>
            <person name="de Jong P."/>
            <person name="Edwards K."/>
            <person name="Englund P.T."/>
            <person name="Fazelina G."/>
            <person name="Feldblyum T."/>
            <person name="Ferella M."/>
            <person name="Frasch A.C."/>
            <person name="Gull K."/>
            <person name="Horn D."/>
            <person name="Hou L."/>
            <person name="Huang Y."/>
            <person name="Kindlund E."/>
            <person name="Klingbeil M."/>
            <person name="Kluge S."/>
            <person name="Koo H."/>
            <person name="Lacerda D."/>
            <person name="Levin M.J."/>
            <person name="Lorenzi H."/>
            <person name="Louie T."/>
            <person name="Machado C.R."/>
            <person name="McCulloch R."/>
            <person name="McKenna A."/>
            <person name="Mizuno Y."/>
            <person name="Mottram J.C."/>
            <person name="Nelson S."/>
            <person name="Ochaya S."/>
            <person name="Osoegawa K."/>
            <person name="Pai G."/>
            <person name="Parsons M."/>
            <person name="Pentony M."/>
            <person name="Pettersson U."/>
            <person name="Pop M."/>
            <person name="Ramirez J.L."/>
            <person name="Rinta J."/>
            <person name="Robertson L."/>
            <person name="Salzberg S.L."/>
            <person name="Sanchez D.O."/>
            <person name="Seyler A."/>
            <person name="Sharma R."/>
            <person name="Shetty J."/>
            <person name="Simpson A.J."/>
            <person name="Sisk E."/>
            <person name="Tammi M.T."/>
            <person name="Tarleton R."/>
            <person name="Teixeira S."/>
            <person name="Van Aken S."/>
            <person name="Vogt C."/>
            <person name="Ward P.N."/>
            <person name="Wickstead B."/>
            <person name="Wortman J."/>
            <person name="White O."/>
            <person name="Fraser C.M."/>
            <person name="Stuart K.D."/>
            <person name="Andersson B."/>
        </authorList>
    </citation>
    <scope>NUCLEOTIDE SEQUENCE [LARGE SCALE GENOMIC DNA]</scope>
    <source>
        <strain>CL Brener</strain>
    </source>
</reference>
<gene>
    <name type="ORF">Tc00.1047053503971.40</name>
</gene>
<evidence type="ECO:0000255" key="1">
    <source>
        <dbReference type="HAMAP-Rule" id="MF_03119"/>
    </source>
</evidence>
<name>MTNA1_TRYCC</name>
<protein>
    <recommendedName>
        <fullName evidence="1">Methylthioribose-1-phosphate isomerase 1</fullName>
        <shortName evidence="1">M1Pi 1</shortName>
        <shortName evidence="1">MTR-1-P isomerase 1</shortName>
        <ecNumber evidence="1">5.3.1.23</ecNumber>
    </recommendedName>
    <alternativeName>
        <fullName evidence="1">S-methyl-5-thioribose-1-phosphate isomerase 1</fullName>
    </alternativeName>
    <alternativeName>
        <fullName evidence="1">Translation initiation factor eIF-2B subunit alpha/beta/delta-like protein 1</fullName>
    </alternativeName>
</protein>
<proteinExistence type="inferred from homology"/>
<accession>Q4CY36</accession>
<feature type="chain" id="PRO_0000402004" description="Methylthioribose-1-phosphate isomerase 1">
    <location>
        <begin position="1"/>
        <end position="372"/>
    </location>
</feature>
<feature type="active site" description="Proton donor" evidence="1">
    <location>
        <position position="254"/>
    </location>
</feature>
<feature type="site" description="Transition state stabilizer" evidence="1">
    <location>
        <position position="174"/>
    </location>
</feature>